<dbReference type="EMBL" id="CP000922">
    <property type="protein sequence ID" value="ACJ33211.1"/>
    <property type="molecule type" value="Genomic_DNA"/>
</dbReference>
<dbReference type="RefSeq" id="WP_012574501.1">
    <property type="nucleotide sequence ID" value="NC_011567.1"/>
</dbReference>
<dbReference type="SMR" id="B7GKC6"/>
<dbReference type="STRING" id="491915.Aflv_0833"/>
<dbReference type="GeneID" id="7037090"/>
<dbReference type="KEGG" id="afl:Aflv_0833"/>
<dbReference type="PATRIC" id="fig|491915.6.peg.853"/>
<dbReference type="eggNOG" id="COG1420">
    <property type="taxonomic scope" value="Bacteria"/>
</dbReference>
<dbReference type="HOGENOM" id="CLU_050019_1_0_9"/>
<dbReference type="Proteomes" id="UP000000742">
    <property type="component" value="Chromosome"/>
</dbReference>
<dbReference type="GO" id="GO:0003677">
    <property type="term" value="F:DNA binding"/>
    <property type="evidence" value="ECO:0007669"/>
    <property type="project" value="InterPro"/>
</dbReference>
<dbReference type="GO" id="GO:0045892">
    <property type="term" value="P:negative regulation of DNA-templated transcription"/>
    <property type="evidence" value="ECO:0007669"/>
    <property type="project" value="UniProtKB-UniRule"/>
</dbReference>
<dbReference type="FunFam" id="1.10.10.10:FF:000049">
    <property type="entry name" value="Heat-inducible transcription repressor HrcA"/>
    <property type="match status" value="1"/>
</dbReference>
<dbReference type="Gene3D" id="3.30.450.40">
    <property type="match status" value="1"/>
</dbReference>
<dbReference type="Gene3D" id="3.30.390.60">
    <property type="entry name" value="Heat-inducible transcription repressor hrca homolog, domain 3"/>
    <property type="match status" value="1"/>
</dbReference>
<dbReference type="Gene3D" id="1.10.10.10">
    <property type="entry name" value="Winged helix-like DNA-binding domain superfamily/Winged helix DNA-binding domain"/>
    <property type="match status" value="1"/>
</dbReference>
<dbReference type="HAMAP" id="MF_00081">
    <property type="entry name" value="HrcA"/>
    <property type="match status" value="1"/>
</dbReference>
<dbReference type="InterPro" id="IPR029016">
    <property type="entry name" value="GAF-like_dom_sf"/>
</dbReference>
<dbReference type="InterPro" id="IPR002571">
    <property type="entry name" value="HrcA"/>
</dbReference>
<dbReference type="InterPro" id="IPR021153">
    <property type="entry name" value="HrcA_C"/>
</dbReference>
<dbReference type="InterPro" id="IPR036388">
    <property type="entry name" value="WH-like_DNA-bd_sf"/>
</dbReference>
<dbReference type="InterPro" id="IPR036390">
    <property type="entry name" value="WH_DNA-bd_sf"/>
</dbReference>
<dbReference type="InterPro" id="IPR023120">
    <property type="entry name" value="WHTH_transcript_rep_HrcA_IDD"/>
</dbReference>
<dbReference type="NCBIfam" id="TIGR00331">
    <property type="entry name" value="hrcA"/>
    <property type="match status" value="1"/>
</dbReference>
<dbReference type="PANTHER" id="PTHR34824">
    <property type="entry name" value="HEAT-INDUCIBLE TRANSCRIPTION REPRESSOR HRCA"/>
    <property type="match status" value="1"/>
</dbReference>
<dbReference type="PANTHER" id="PTHR34824:SF1">
    <property type="entry name" value="HEAT-INDUCIBLE TRANSCRIPTION REPRESSOR HRCA"/>
    <property type="match status" value="1"/>
</dbReference>
<dbReference type="Pfam" id="PF01628">
    <property type="entry name" value="HrcA"/>
    <property type="match status" value="1"/>
</dbReference>
<dbReference type="PIRSF" id="PIRSF005485">
    <property type="entry name" value="HrcA"/>
    <property type="match status" value="1"/>
</dbReference>
<dbReference type="SUPFAM" id="SSF55781">
    <property type="entry name" value="GAF domain-like"/>
    <property type="match status" value="1"/>
</dbReference>
<dbReference type="SUPFAM" id="SSF46785">
    <property type="entry name" value="Winged helix' DNA-binding domain"/>
    <property type="match status" value="1"/>
</dbReference>
<sequence length="344" mass="38964">MLSDRQLLILKIIVDDFIRSGQPVGSRTLSKKEQITFSSATIRNEMADLEELGFIEKTHISSGRVPSQKGYRYYVDHLLPPVRLTQKDVQTIQSIFHEQIYELEKLIQKSAQILSDLTNYTTVVLGPSVKEHKLKTIQIIPLNAETAVAIIVTDTGYVEKHVVTLPPSIPPSDVEKMVNILNERLTGVPLEDLTDKIQTEVAHVLREHIQSYDHMLRMISSSLDLNAPAQMFLSGKMNMLRQPEFSDIDKLRGLFNIIEQEKEFYRLLRKHNQQGIQVKIGTENDVEGMENCSLITATYSVGGEKLGTIAVLGPTRMEYSRVISLLNLVATDLSKALTMWYQKD</sequence>
<organism>
    <name type="scientific">Anoxybacillus flavithermus (strain DSM 21510 / WK1)</name>
    <dbReference type="NCBI Taxonomy" id="491915"/>
    <lineage>
        <taxon>Bacteria</taxon>
        <taxon>Bacillati</taxon>
        <taxon>Bacillota</taxon>
        <taxon>Bacilli</taxon>
        <taxon>Bacillales</taxon>
        <taxon>Anoxybacillaceae</taxon>
        <taxon>Anoxybacillus</taxon>
    </lineage>
</organism>
<name>HRCA_ANOFW</name>
<protein>
    <recommendedName>
        <fullName evidence="1">Heat-inducible transcription repressor HrcA</fullName>
    </recommendedName>
</protein>
<reference key="1">
    <citation type="journal article" date="2008" name="Genome Biol.">
        <title>Encapsulated in silica: genome, proteome and physiology of the thermophilic bacterium Anoxybacillus flavithermus WK1.</title>
        <authorList>
            <person name="Saw J.H."/>
            <person name="Mountain B.W."/>
            <person name="Feng L."/>
            <person name="Omelchenko M.V."/>
            <person name="Hou S."/>
            <person name="Saito J.A."/>
            <person name="Stott M.B."/>
            <person name="Li D."/>
            <person name="Zhao G."/>
            <person name="Wu J."/>
            <person name="Galperin M.Y."/>
            <person name="Koonin E.V."/>
            <person name="Makarova K.S."/>
            <person name="Wolf Y.I."/>
            <person name="Rigden D.J."/>
            <person name="Dunfield P.F."/>
            <person name="Wang L."/>
            <person name="Alam M."/>
        </authorList>
    </citation>
    <scope>NUCLEOTIDE SEQUENCE [LARGE SCALE GENOMIC DNA]</scope>
    <source>
        <strain>DSM 21510 / WK1</strain>
    </source>
</reference>
<comment type="function">
    <text evidence="1">Negative regulator of class I heat shock genes (grpE-dnaK-dnaJ and groELS operons). Prevents heat-shock induction of these operons.</text>
</comment>
<comment type="similarity">
    <text evidence="1">Belongs to the HrcA family.</text>
</comment>
<proteinExistence type="inferred from homology"/>
<evidence type="ECO:0000255" key="1">
    <source>
        <dbReference type="HAMAP-Rule" id="MF_00081"/>
    </source>
</evidence>
<gene>
    <name evidence="1" type="primary">hrcA</name>
    <name type="ordered locus">Aflv_0833</name>
</gene>
<accession>B7GKC6</accession>
<keyword id="KW-0678">Repressor</keyword>
<keyword id="KW-0346">Stress response</keyword>
<keyword id="KW-0804">Transcription</keyword>
<keyword id="KW-0805">Transcription regulation</keyword>
<feature type="chain" id="PRO_1000117105" description="Heat-inducible transcription repressor HrcA">
    <location>
        <begin position="1"/>
        <end position="344"/>
    </location>
</feature>